<gene>
    <name type="ordered locus">MA_3383</name>
</gene>
<proteinExistence type="inferred from homology"/>
<reference key="1">
    <citation type="journal article" date="2002" name="Genome Res.">
        <title>The genome of Methanosarcina acetivorans reveals extensive metabolic and physiological diversity.</title>
        <authorList>
            <person name="Galagan J.E."/>
            <person name="Nusbaum C."/>
            <person name="Roy A."/>
            <person name="Endrizzi M.G."/>
            <person name="Macdonald P."/>
            <person name="FitzHugh W."/>
            <person name="Calvo S."/>
            <person name="Engels R."/>
            <person name="Smirnov S."/>
            <person name="Atnoor D."/>
            <person name="Brown A."/>
            <person name="Allen N."/>
            <person name="Naylor J."/>
            <person name="Stange-Thomann N."/>
            <person name="DeArellano K."/>
            <person name="Johnson R."/>
            <person name="Linton L."/>
            <person name="McEwan P."/>
            <person name="McKernan K."/>
            <person name="Talamas J."/>
            <person name="Tirrell A."/>
            <person name="Ye W."/>
            <person name="Zimmer A."/>
            <person name="Barber R.D."/>
            <person name="Cann I."/>
            <person name="Graham D.E."/>
            <person name="Grahame D.A."/>
            <person name="Guss A.M."/>
            <person name="Hedderich R."/>
            <person name="Ingram-Smith C."/>
            <person name="Kuettner H.C."/>
            <person name="Krzycki J.A."/>
            <person name="Leigh J.A."/>
            <person name="Li W."/>
            <person name="Liu J."/>
            <person name="Mukhopadhyay B."/>
            <person name="Reeve J.N."/>
            <person name="Smith K."/>
            <person name="Springer T.A."/>
            <person name="Umayam L.A."/>
            <person name="White O."/>
            <person name="White R.H."/>
            <person name="de Macario E.C."/>
            <person name="Ferry J.G."/>
            <person name="Jarrell K.F."/>
            <person name="Jing H."/>
            <person name="Macario A.J.L."/>
            <person name="Paulsen I.T."/>
            <person name="Pritchett M."/>
            <person name="Sowers K.R."/>
            <person name="Swanson R.V."/>
            <person name="Zinder S.H."/>
            <person name="Lander E."/>
            <person name="Metcalf W.W."/>
            <person name="Birren B."/>
        </authorList>
    </citation>
    <scope>NUCLEOTIDE SEQUENCE [LARGE SCALE GENOMIC DNA]</scope>
    <source>
        <strain>ATCC 35395 / DSM 2834 / JCM 12185 / C2A</strain>
    </source>
</reference>
<evidence type="ECO:0000255" key="1">
    <source>
        <dbReference type="HAMAP-Rule" id="MF_00338"/>
    </source>
</evidence>
<name>Y3383_METAC</name>
<protein>
    <recommendedName>
        <fullName evidence="1">UPF0145 protein MA_3383</fullName>
    </recommendedName>
</protein>
<organism>
    <name type="scientific">Methanosarcina acetivorans (strain ATCC 35395 / DSM 2834 / JCM 12185 / C2A)</name>
    <dbReference type="NCBI Taxonomy" id="188937"/>
    <lineage>
        <taxon>Archaea</taxon>
        <taxon>Methanobacteriati</taxon>
        <taxon>Methanobacteriota</taxon>
        <taxon>Stenosarchaea group</taxon>
        <taxon>Methanomicrobia</taxon>
        <taxon>Methanosarcinales</taxon>
        <taxon>Methanosarcinaceae</taxon>
        <taxon>Methanosarcina</taxon>
    </lineage>
</organism>
<sequence length="106" mass="11397">MIIATTDTIAGKEITKTLGMARGSTIQAKHLGKDIMSGLRSVVGGELTEYSKMLEEAREKAINRMVEDAEKMGADAVVNVRFMTSMVMAGAAEILAYGTAVKIMNR</sequence>
<dbReference type="EMBL" id="AE010299">
    <property type="protein sequence ID" value="AAM06752.1"/>
    <property type="molecule type" value="Genomic_DNA"/>
</dbReference>
<dbReference type="RefSeq" id="WP_011023310.1">
    <property type="nucleotide sequence ID" value="NC_003552.1"/>
</dbReference>
<dbReference type="SMR" id="Q8TKM0"/>
<dbReference type="STRING" id="188937.MA_3383"/>
<dbReference type="EnsemblBacteria" id="AAM06752">
    <property type="protein sequence ID" value="AAM06752"/>
    <property type="gene ID" value="MA_3383"/>
</dbReference>
<dbReference type="GeneID" id="1475276"/>
<dbReference type="KEGG" id="mac:MA_3383"/>
<dbReference type="HOGENOM" id="CLU_117144_1_2_2"/>
<dbReference type="InParanoid" id="Q8TKM0"/>
<dbReference type="OrthoDB" id="59443at2157"/>
<dbReference type="PhylomeDB" id="Q8TKM0"/>
<dbReference type="Proteomes" id="UP000002487">
    <property type="component" value="Chromosome"/>
</dbReference>
<dbReference type="Gene3D" id="3.30.110.70">
    <property type="entry name" value="Hypothetical protein apc22750. Chain B"/>
    <property type="match status" value="1"/>
</dbReference>
<dbReference type="HAMAP" id="MF_00338">
    <property type="entry name" value="UPF0145"/>
    <property type="match status" value="1"/>
</dbReference>
<dbReference type="InterPro" id="IPR035439">
    <property type="entry name" value="UPF0145_dom_sf"/>
</dbReference>
<dbReference type="InterPro" id="IPR002765">
    <property type="entry name" value="UPF0145_YbjQ-like"/>
</dbReference>
<dbReference type="PANTHER" id="PTHR34068:SF2">
    <property type="entry name" value="UPF0145 PROTEIN SCO3412"/>
    <property type="match status" value="1"/>
</dbReference>
<dbReference type="PANTHER" id="PTHR34068">
    <property type="entry name" value="UPF0145 PROTEIN YBJQ"/>
    <property type="match status" value="1"/>
</dbReference>
<dbReference type="Pfam" id="PF01906">
    <property type="entry name" value="YbjQ_1"/>
    <property type="match status" value="1"/>
</dbReference>
<dbReference type="SUPFAM" id="SSF117782">
    <property type="entry name" value="YbjQ-like"/>
    <property type="match status" value="1"/>
</dbReference>
<accession>Q8TKM0</accession>
<comment type="similarity">
    <text evidence="1">Belongs to the UPF0145 family.</text>
</comment>
<keyword id="KW-1185">Reference proteome</keyword>
<feature type="chain" id="PRO_0000138494" description="UPF0145 protein MA_3383">
    <location>
        <begin position="1"/>
        <end position="106"/>
    </location>
</feature>